<feature type="chain" id="PRO_1000045765" description="Adenosylcobinamide-GDP ribazoletransferase">
    <location>
        <begin position="1"/>
        <end position="251"/>
    </location>
</feature>
<feature type="transmembrane region" description="Helical" evidence="1">
    <location>
        <begin position="36"/>
        <end position="56"/>
    </location>
</feature>
<feature type="transmembrane region" description="Helical" evidence="1">
    <location>
        <begin position="60"/>
        <end position="80"/>
    </location>
</feature>
<feature type="transmembrane region" description="Helical" evidence="1">
    <location>
        <begin position="110"/>
        <end position="130"/>
    </location>
</feature>
<feature type="transmembrane region" description="Helical" evidence="1">
    <location>
        <begin position="181"/>
        <end position="201"/>
    </location>
</feature>
<feature type="transmembrane region" description="Helical" evidence="1">
    <location>
        <begin position="202"/>
        <end position="222"/>
    </location>
</feature>
<feature type="transmembrane region" description="Helical" evidence="1">
    <location>
        <begin position="231"/>
        <end position="251"/>
    </location>
</feature>
<gene>
    <name evidence="1" type="primary">cobS</name>
    <name type="ordered locus">CPR_1110</name>
</gene>
<reference key="1">
    <citation type="journal article" date="2006" name="Genome Res.">
        <title>Skewed genomic variability in strains of the toxigenic bacterial pathogen, Clostridium perfringens.</title>
        <authorList>
            <person name="Myers G.S.A."/>
            <person name="Rasko D.A."/>
            <person name="Cheung J.K."/>
            <person name="Ravel J."/>
            <person name="Seshadri R."/>
            <person name="DeBoy R.T."/>
            <person name="Ren Q."/>
            <person name="Varga J."/>
            <person name="Awad M.M."/>
            <person name="Brinkac L.M."/>
            <person name="Daugherty S.C."/>
            <person name="Haft D.H."/>
            <person name="Dodson R.J."/>
            <person name="Madupu R."/>
            <person name="Nelson W.C."/>
            <person name="Rosovitz M.J."/>
            <person name="Sullivan S.A."/>
            <person name="Khouri H."/>
            <person name="Dimitrov G.I."/>
            <person name="Watkins K.L."/>
            <person name="Mulligan S."/>
            <person name="Benton J."/>
            <person name="Radune D."/>
            <person name="Fisher D.J."/>
            <person name="Atkins H.S."/>
            <person name="Hiscox T."/>
            <person name="Jost B.H."/>
            <person name="Billington S.J."/>
            <person name="Songer J.G."/>
            <person name="McClane B.A."/>
            <person name="Titball R.W."/>
            <person name="Rood J.I."/>
            <person name="Melville S.B."/>
            <person name="Paulsen I.T."/>
        </authorList>
    </citation>
    <scope>NUCLEOTIDE SEQUENCE [LARGE SCALE GENOMIC DNA]</scope>
    <source>
        <strain>SM101 / Type A</strain>
    </source>
</reference>
<sequence>MKIFYKAINMTLSMFTVIPLPKYEWDDRAAKHIMKLYPFIGLIIGILWYLSFFVLSKLNVPIMLMAALILTVPYILTGFLHLDGFMDVSDALLSRRDKETKLRILKDSTVGAFSVISVVLLLLVEFAGIFTVLNKNLDMRILIFIPIASRTMNGYFIVSQEMLGQSSLAKFFKEGTGKVDEIILLGIYVLVALITFFTLGINYLIAILAMGLISFILLLKVKKELGGINGDVAGYILVLMEFTGILLLGII</sequence>
<accession>Q0STX5</accession>
<comment type="function">
    <text evidence="1">Joins adenosylcobinamide-GDP and alpha-ribazole to generate adenosylcobalamin (Ado-cobalamin). Also synthesizes adenosylcobalamin 5'-phosphate from adenosylcobinamide-GDP and alpha-ribazole 5'-phosphate.</text>
</comment>
<comment type="catalytic activity">
    <reaction evidence="1">
        <text>alpha-ribazole + adenosylcob(III)inamide-GDP = adenosylcob(III)alamin + GMP + H(+)</text>
        <dbReference type="Rhea" id="RHEA:16049"/>
        <dbReference type="ChEBI" id="CHEBI:10329"/>
        <dbReference type="ChEBI" id="CHEBI:15378"/>
        <dbReference type="ChEBI" id="CHEBI:18408"/>
        <dbReference type="ChEBI" id="CHEBI:58115"/>
        <dbReference type="ChEBI" id="CHEBI:60487"/>
        <dbReference type="EC" id="2.7.8.26"/>
    </reaction>
</comment>
<comment type="catalytic activity">
    <reaction evidence="1">
        <text>alpha-ribazole 5'-phosphate + adenosylcob(III)inamide-GDP = adenosylcob(III)alamin 5'-phosphate + GMP + H(+)</text>
        <dbReference type="Rhea" id="RHEA:23560"/>
        <dbReference type="ChEBI" id="CHEBI:15378"/>
        <dbReference type="ChEBI" id="CHEBI:57918"/>
        <dbReference type="ChEBI" id="CHEBI:58115"/>
        <dbReference type="ChEBI" id="CHEBI:60487"/>
        <dbReference type="ChEBI" id="CHEBI:60493"/>
        <dbReference type="EC" id="2.7.8.26"/>
    </reaction>
</comment>
<comment type="cofactor">
    <cofactor evidence="1">
        <name>Mg(2+)</name>
        <dbReference type="ChEBI" id="CHEBI:18420"/>
    </cofactor>
</comment>
<comment type="pathway">
    <text evidence="1">Cofactor biosynthesis; adenosylcobalamin biosynthesis; adenosylcobalamin from cob(II)yrinate a,c-diamide: step 7/7.</text>
</comment>
<comment type="subcellular location">
    <subcellularLocation>
        <location evidence="1">Cell membrane</location>
        <topology evidence="1">Multi-pass membrane protein</topology>
    </subcellularLocation>
</comment>
<comment type="similarity">
    <text evidence="1">Belongs to the CobS family.</text>
</comment>
<organism>
    <name type="scientific">Clostridium perfringens (strain SM101 / Type A)</name>
    <dbReference type="NCBI Taxonomy" id="289380"/>
    <lineage>
        <taxon>Bacteria</taxon>
        <taxon>Bacillati</taxon>
        <taxon>Bacillota</taxon>
        <taxon>Clostridia</taxon>
        <taxon>Eubacteriales</taxon>
        <taxon>Clostridiaceae</taxon>
        <taxon>Clostridium</taxon>
    </lineage>
</organism>
<protein>
    <recommendedName>
        <fullName evidence="1">Adenosylcobinamide-GDP ribazoletransferase</fullName>
        <ecNumber evidence="1">2.7.8.26</ecNumber>
    </recommendedName>
    <alternativeName>
        <fullName evidence="1">Cobalamin synthase</fullName>
    </alternativeName>
    <alternativeName>
        <fullName evidence="1">Cobalamin-5'-phosphate synthase</fullName>
    </alternativeName>
</protein>
<dbReference type="EC" id="2.7.8.26" evidence="1"/>
<dbReference type="EMBL" id="CP000312">
    <property type="protein sequence ID" value="ABG85705.1"/>
    <property type="molecule type" value="Genomic_DNA"/>
</dbReference>
<dbReference type="RefSeq" id="WP_011592129.1">
    <property type="nucleotide sequence ID" value="NC_008262.1"/>
</dbReference>
<dbReference type="KEGG" id="cpr:CPR_1110"/>
<dbReference type="UniPathway" id="UPA00148">
    <property type="reaction ID" value="UER00238"/>
</dbReference>
<dbReference type="Proteomes" id="UP000001824">
    <property type="component" value="Chromosome"/>
</dbReference>
<dbReference type="GO" id="GO:0005886">
    <property type="term" value="C:plasma membrane"/>
    <property type="evidence" value="ECO:0007669"/>
    <property type="project" value="UniProtKB-SubCell"/>
</dbReference>
<dbReference type="GO" id="GO:0051073">
    <property type="term" value="F:adenosylcobinamide-GDP ribazoletransferase activity"/>
    <property type="evidence" value="ECO:0007669"/>
    <property type="project" value="UniProtKB-UniRule"/>
</dbReference>
<dbReference type="GO" id="GO:0008818">
    <property type="term" value="F:cobalamin 5'-phosphate synthase activity"/>
    <property type="evidence" value="ECO:0007669"/>
    <property type="project" value="UniProtKB-UniRule"/>
</dbReference>
<dbReference type="GO" id="GO:0009236">
    <property type="term" value="P:cobalamin biosynthetic process"/>
    <property type="evidence" value="ECO:0007669"/>
    <property type="project" value="UniProtKB-UniRule"/>
</dbReference>
<dbReference type="HAMAP" id="MF_00719">
    <property type="entry name" value="CobS"/>
    <property type="match status" value="1"/>
</dbReference>
<dbReference type="InterPro" id="IPR003805">
    <property type="entry name" value="CobS"/>
</dbReference>
<dbReference type="PANTHER" id="PTHR34148">
    <property type="entry name" value="ADENOSYLCOBINAMIDE-GDP RIBAZOLETRANSFERASE"/>
    <property type="match status" value="1"/>
</dbReference>
<dbReference type="PANTHER" id="PTHR34148:SF1">
    <property type="entry name" value="ADENOSYLCOBINAMIDE-GDP RIBAZOLETRANSFERASE"/>
    <property type="match status" value="1"/>
</dbReference>
<dbReference type="Pfam" id="PF02654">
    <property type="entry name" value="CobS"/>
    <property type="match status" value="1"/>
</dbReference>
<keyword id="KW-1003">Cell membrane</keyword>
<keyword id="KW-0169">Cobalamin biosynthesis</keyword>
<keyword id="KW-0460">Magnesium</keyword>
<keyword id="KW-0472">Membrane</keyword>
<keyword id="KW-0808">Transferase</keyword>
<keyword id="KW-0812">Transmembrane</keyword>
<keyword id="KW-1133">Transmembrane helix</keyword>
<proteinExistence type="inferred from homology"/>
<name>COBS_CLOPS</name>
<evidence type="ECO:0000255" key="1">
    <source>
        <dbReference type="HAMAP-Rule" id="MF_00719"/>
    </source>
</evidence>